<name>MGRB_ENT38</name>
<organism>
    <name type="scientific">Enterobacter sp. (strain 638)</name>
    <dbReference type="NCBI Taxonomy" id="399742"/>
    <lineage>
        <taxon>Bacteria</taxon>
        <taxon>Pseudomonadati</taxon>
        <taxon>Pseudomonadota</taxon>
        <taxon>Gammaproteobacteria</taxon>
        <taxon>Enterobacterales</taxon>
        <taxon>Enterobacteriaceae</taxon>
        <taxon>Enterobacter</taxon>
    </lineage>
</organism>
<proteinExistence type="inferred from homology"/>
<feature type="chain" id="PRO_0000330668" description="PhoP/PhoQ regulator MgrB">
    <location>
        <begin position="1"/>
        <end position="47"/>
    </location>
</feature>
<feature type="transmembrane region" description="Helical" evidence="1">
    <location>
        <begin position="6"/>
        <end position="26"/>
    </location>
</feature>
<gene>
    <name evidence="1" type="primary">mgrB</name>
    <name type="ordered locus">Ent638_2395</name>
</gene>
<reference key="1">
    <citation type="journal article" date="2010" name="PLoS Genet.">
        <title>Genome sequence of the plant growth promoting endophytic bacterium Enterobacter sp. 638.</title>
        <authorList>
            <person name="Taghavi S."/>
            <person name="van der Lelie D."/>
            <person name="Hoffman A."/>
            <person name="Zhang Y.B."/>
            <person name="Walla M.D."/>
            <person name="Vangronsveld J."/>
            <person name="Newman L."/>
            <person name="Monchy S."/>
        </authorList>
    </citation>
    <scope>NUCLEOTIDE SEQUENCE [LARGE SCALE GENOMIC DNA]</scope>
    <source>
        <strain>638</strain>
    </source>
</reference>
<dbReference type="EMBL" id="CP000653">
    <property type="protein sequence ID" value="ABP61064.1"/>
    <property type="molecule type" value="Genomic_DNA"/>
</dbReference>
<dbReference type="RefSeq" id="WP_015959397.1">
    <property type="nucleotide sequence ID" value="NC_009436.1"/>
</dbReference>
<dbReference type="SMR" id="A4WBI4"/>
<dbReference type="STRING" id="399742.Ent638_2395"/>
<dbReference type="KEGG" id="ent:Ent638_2395"/>
<dbReference type="eggNOG" id="ENOG50333DF">
    <property type="taxonomic scope" value="Bacteria"/>
</dbReference>
<dbReference type="HOGENOM" id="CLU_208030_1_0_6"/>
<dbReference type="Proteomes" id="UP000000230">
    <property type="component" value="Chromosome"/>
</dbReference>
<dbReference type="GO" id="GO:0005886">
    <property type="term" value="C:plasma membrane"/>
    <property type="evidence" value="ECO:0007669"/>
    <property type="project" value="UniProtKB-SubCell"/>
</dbReference>
<dbReference type="GO" id="GO:0070298">
    <property type="term" value="P:negative regulation of phosphorelay signal transduction system"/>
    <property type="evidence" value="ECO:0007669"/>
    <property type="project" value="UniProtKB-UniRule"/>
</dbReference>
<dbReference type="HAMAP" id="MF_01596">
    <property type="entry name" value="MgrB"/>
    <property type="match status" value="1"/>
</dbReference>
<dbReference type="InterPro" id="IPR020907">
    <property type="entry name" value="MgrB"/>
</dbReference>
<dbReference type="NCBIfam" id="NF007635">
    <property type="entry name" value="PRK10299.1"/>
    <property type="match status" value="1"/>
</dbReference>
<dbReference type="Pfam" id="PF13998">
    <property type="entry name" value="MgrB"/>
    <property type="match status" value="1"/>
</dbReference>
<dbReference type="PROSITE" id="PS51257">
    <property type="entry name" value="PROKAR_LIPOPROTEIN"/>
    <property type="match status" value="1"/>
</dbReference>
<comment type="function">
    <text evidence="1">PhoP-regulated transcription is redox-sensitive, being activated when the periplasm becomes more reducing. MgrB acts between DsbA/DsbB and PhoP/PhoQ in this pathway. Represses PhoP/PhoQ signaling, possibly by binding to the periplasmic domain of PhoQ, altering its activity and that of downstream effector PhoP.</text>
</comment>
<comment type="subunit">
    <text evidence="1">May form homooligomers. Probably interacts with the periplasmic domain of PhoQ.</text>
</comment>
<comment type="subcellular location">
    <subcellularLocation>
        <location evidence="1">Cell inner membrane</location>
        <topology evidence="1">Single-pass membrane protein</topology>
    </subcellularLocation>
</comment>
<comment type="similarity">
    <text evidence="1">Belongs to the MgrB family.</text>
</comment>
<protein>
    <recommendedName>
        <fullName evidence="1">PhoP/PhoQ regulator MgrB</fullName>
    </recommendedName>
</protein>
<evidence type="ECO:0000255" key="1">
    <source>
        <dbReference type="HAMAP-Rule" id="MF_01596"/>
    </source>
</evidence>
<sequence>MKKIRWVILIIVLIACVILWTQTINVMCDQDVQFFSGICAINQFIPW</sequence>
<accession>A4WBI4</accession>
<keyword id="KW-0997">Cell inner membrane</keyword>
<keyword id="KW-1003">Cell membrane</keyword>
<keyword id="KW-0472">Membrane</keyword>
<keyword id="KW-0812">Transmembrane</keyword>
<keyword id="KW-1133">Transmembrane helix</keyword>